<organism>
    <name type="scientific">Populus alba</name>
    <name type="common">White poplar</name>
    <dbReference type="NCBI Taxonomy" id="43335"/>
    <lineage>
        <taxon>Eukaryota</taxon>
        <taxon>Viridiplantae</taxon>
        <taxon>Streptophyta</taxon>
        <taxon>Embryophyta</taxon>
        <taxon>Tracheophyta</taxon>
        <taxon>Spermatophyta</taxon>
        <taxon>Magnoliopsida</taxon>
        <taxon>eudicotyledons</taxon>
        <taxon>Gunneridae</taxon>
        <taxon>Pentapetalae</taxon>
        <taxon>rosids</taxon>
        <taxon>fabids</taxon>
        <taxon>Malpighiales</taxon>
        <taxon>Salicaceae</taxon>
        <taxon>Saliceae</taxon>
        <taxon>Populus</taxon>
    </lineage>
</organism>
<evidence type="ECO:0000255" key="1">
    <source>
        <dbReference type="HAMAP-Rule" id="MF_00270"/>
    </source>
</evidence>
<evidence type="ECO:0000305" key="2"/>
<sequence length="101" mass="11962">MDKSKRLFLKPKRSLRRRLPPIGSGDRIDYRNMSLISRFISEQGKILSRRVNRLTLKQQRLITIAIKQARILSSLPFLNNERQFEKNELVARTTGLRTRKK</sequence>
<gene>
    <name evidence="1" type="primary">rps18</name>
</gene>
<proteinExistence type="inferred from homology"/>
<dbReference type="EMBL" id="AP008956">
    <property type="protein sequence ID" value="BAE97227.1"/>
    <property type="molecule type" value="Genomic_DNA"/>
</dbReference>
<dbReference type="RefSeq" id="YP_665580.1">
    <property type="nucleotide sequence ID" value="NC_008235.1"/>
</dbReference>
<dbReference type="SMR" id="Q14FD5"/>
<dbReference type="GeneID" id="4178261"/>
<dbReference type="KEGG" id="palz:4178261"/>
<dbReference type="OrthoDB" id="34438at3646"/>
<dbReference type="GO" id="GO:0009507">
    <property type="term" value="C:chloroplast"/>
    <property type="evidence" value="ECO:0007669"/>
    <property type="project" value="UniProtKB-SubCell"/>
</dbReference>
<dbReference type="GO" id="GO:0005763">
    <property type="term" value="C:mitochondrial small ribosomal subunit"/>
    <property type="evidence" value="ECO:0007669"/>
    <property type="project" value="TreeGrafter"/>
</dbReference>
<dbReference type="GO" id="GO:0070181">
    <property type="term" value="F:small ribosomal subunit rRNA binding"/>
    <property type="evidence" value="ECO:0007669"/>
    <property type="project" value="TreeGrafter"/>
</dbReference>
<dbReference type="GO" id="GO:0003735">
    <property type="term" value="F:structural constituent of ribosome"/>
    <property type="evidence" value="ECO:0007669"/>
    <property type="project" value="InterPro"/>
</dbReference>
<dbReference type="GO" id="GO:0006412">
    <property type="term" value="P:translation"/>
    <property type="evidence" value="ECO:0007669"/>
    <property type="project" value="UniProtKB-UniRule"/>
</dbReference>
<dbReference type="FunFam" id="4.10.640.10:FF:000002">
    <property type="entry name" value="30S ribosomal protein S18, chloroplastic"/>
    <property type="match status" value="1"/>
</dbReference>
<dbReference type="Gene3D" id="4.10.640.10">
    <property type="entry name" value="Ribosomal protein S18"/>
    <property type="match status" value="1"/>
</dbReference>
<dbReference type="HAMAP" id="MF_00270">
    <property type="entry name" value="Ribosomal_bS18"/>
    <property type="match status" value="1"/>
</dbReference>
<dbReference type="InterPro" id="IPR001648">
    <property type="entry name" value="Ribosomal_bS18"/>
</dbReference>
<dbReference type="InterPro" id="IPR018275">
    <property type="entry name" value="Ribosomal_bS18_CS"/>
</dbReference>
<dbReference type="InterPro" id="IPR036870">
    <property type="entry name" value="Ribosomal_bS18_sf"/>
</dbReference>
<dbReference type="NCBIfam" id="TIGR00165">
    <property type="entry name" value="S18"/>
    <property type="match status" value="1"/>
</dbReference>
<dbReference type="PANTHER" id="PTHR13479">
    <property type="entry name" value="30S RIBOSOMAL PROTEIN S18"/>
    <property type="match status" value="1"/>
</dbReference>
<dbReference type="PANTHER" id="PTHR13479:SF40">
    <property type="entry name" value="SMALL RIBOSOMAL SUBUNIT PROTEIN BS18M"/>
    <property type="match status" value="1"/>
</dbReference>
<dbReference type="Pfam" id="PF01084">
    <property type="entry name" value="Ribosomal_S18"/>
    <property type="match status" value="1"/>
</dbReference>
<dbReference type="PRINTS" id="PR00974">
    <property type="entry name" value="RIBOSOMALS18"/>
</dbReference>
<dbReference type="SUPFAM" id="SSF46911">
    <property type="entry name" value="Ribosomal protein S18"/>
    <property type="match status" value="1"/>
</dbReference>
<dbReference type="PROSITE" id="PS00057">
    <property type="entry name" value="RIBOSOMAL_S18"/>
    <property type="match status" value="1"/>
</dbReference>
<keyword id="KW-0150">Chloroplast</keyword>
<keyword id="KW-0934">Plastid</keyword>
<keyword id="KW-0687">Ribonucleoprotein</keyword>
<keyword id="KW-0689">Ribosomal protein</keyword>
<keyword id="KW-0694">RNA-binding</keyword>
<keyword id="KW-0699">rRNA-binding</keyword>
<comment type="subunit">
    <text>Part of the 30S ribosomal subunit.</text>
</comment>
<comment type="subcellular location">
    <subcellularLocation>
        <location>Plastid</location>
        <location>Chloroplast</location>
    </subcellularLocation>
</comment>
<comment type="similarity">
    <text evidence="1">Belongs to the bacterial ribosomal protein bS18 family.</text>
</comment>
<protein>
    <recommendedName>
        <fullName evidence="1">Small ribosomal subunit protein bS18c</fullName>
    </recommendedName>
    <alternativeName>
        <fullName evidence="2">30S ribosomal protein S18, chloroplastic</fullName>
    </alternativeName>
</protein>
<feature type="chain" id="PRO_0000276884" description="Small ribosomal subunit protein bS18c">
    <location>
        <begin position="1"/>
        <end position="101"/>
    </location>
</feature>
<name>RR18_POPAL</name>
<accession>Q14FD5</accession>
<reference key="1">
    <citation type="submission" date="2005-03" db="EMBL/GenBank/DDBJ databases">
        <title>Complete structure of the chloroplast genome of Populus alba.</title>
        <authorList>
            <person name="Okumura S."/>
            <person name="Yamashita A."/>
            <person name="Kanamoto H."/>
            <person name="Hattori M."/>
            <person name="Takase H."/>
            <person name="Tomizawa K."/>
        </authorList>
    </citation>
    <scope>NUCLEOTIDE SEQUENCE [LARGE SCALE GENOMIC DNA]</scope>
</reference>
<geneLocation type="chloroplast"/>